<proteinExistence type="inferred from homology"/>
<comment type="function">
    <text evidence="1">NDH-1 shuttles electrons from NADH, via FMN and iron-sulfur (Fe-S) centers, to quinones in the respiratory chain. The immediate electron acceptor for the enzyme in this species is believed to be ubiquinone. Couples the redox reaction to proton translocation (for every two electrons transferred, four hydrogen ions are translocated across the cytoplasmic membrane), and thus conserves the redox energy in a proton gradient.</text>
</comment>
<comment type="catalytic activity">
    <reaction evidence="1">
        <text>a quinone + NADH + 5 H(+)(in) = a quinol + NAD(+) + 4 H(+)(out)</text>
        <dbReference type="Rhea" id="RHEA:57888"/>
        <dbReference type="ChEBI" id="CHEBI:15378"/>
        <dbReference type="ChEBI" id="CHEBI:24646"/>
        <dbReference type="ChEBI" id="CHEBI:57540"/>
        <dbReference type="ChEBI" id="CHEBI:57945"/>
        <dbReference type="ChEBI" id="CHEBI:132124"/>
    </reaction>
</comment>
<comment type="subunit">
    <text evidence="1">NDH-1 is composed of 14 different subunits. Subunits NuoB, C, D, E, F, and G constitute the peripheral sector of the complex.</text>
</comment>
<comment type="subcellular location">
    <subcellularLocation>
        <location evidence="1">Cell inner membrane</location>
        <topology evidence="1">Peripheral membrane protein</topology>
        <orientation evidence="1">Cytoplasmic side</orientation>
    </subcellularLocation>
</comment>
<comment type="similarity">
    <text evidence="1">Belongs to the complex I 30 kDa subunit family.</text>
</comment>
<name>NUOC_GEOSL</name>
<feature type="chain" id="PRO_0000358107" description="NADH-quinone oxidoreductase subunit C">
    <location>
        <begin position="1"/>
        <end position="162"/>
    </location>
</feature>
<dbReference type="EC" id="7.1.1.-" evidence="1"/>
<dbReference type="EMBL" id="AE017180">
    <property type="protein sequence ID" value="AAR33673.1"/>
    <property type="molecule type" value="Genomic_DNA"/>
</dbReference>
<dbReference type="RefSeq" id="NP_951400.1">
    <property type="nucleotide sequence ID" value="NC_002939.5"/>
</dbReference>
<dbReference type="RefSeq" id="WP_010941008.1">
    <property type="nucleotide sequence ID" value="NC_002939.5"/>
</dbReference>
<dbReference type="SMR" id="Q74GA6"/>
<dbReference type="STRING" id="243231.GSU0340"/>
<dbReference type="TCDB" id="3.D.1.5.1">
    <property type="family name" value="the h+ or na+-translocating nadh dehydrogenase (ndh) family"/>
</dbReference>
<dbReference type="EnsemblBacteria" id="AAR33673">
    <property type="protein sequence ID" value="AAR33673"/>
    <property type="gene ID" value="GSU0340"/>
</dbReference>
<dbReference type="KEGG" id="gsu:GSU0340"/>
<dbReference type="PATRIC" id="fig|243231.5.peg.337"/>
<dbReference type="eggNOG" id="COG0852">
    <property type="taxonomic scope" value="Bacteria"/>
</dbReference>
<dbReference type="HOGENOM" id="CLU_042628_6_0_7"/>
<dbReference type="InParanoid" id="Q74GA6"/>
<dbReference type="OrthoDB" id="9803286at2"/>
<dbReference type="Proteomes" id="UP000000577">
    <property type="component" value="Chromosome"/>
</dbReference>
<dbReference type="GO" id="GO:0005886">
    <property type="term" value="C:plasma membrane"/>
    <property type="evidence" value="ECO:0007669"/>
    <property type="project" value="UniProtKB-SubCell"/>
</dbReference>
<dbReference type="GO" id="GO:0008137">
    <property type="term" value="F:NADH dehydrogenase (ubiquinone) activity"/>
    <property type="evidence" value="ECO:0007669"/>
    <property type="project" value="InterPro"/>
</dbReference>
<dbReference type="GO" id="GO:0050136">
    <property type="term" value="F:NADH:ubiquinone reductase (non-electrogenic) activity"/>
    <property type="evidence" value="ECO:0007669"/>
    <property type="project" value="UniProtKB-UniRule"/>
</dbReference>
<dbReference type="GO" id="GO:0048038">
    <property type="term" value="F:quinone binding"/>
    <property type="evidence" value="ECO:0007669"/>
    <property type="project" value="UniProtKB-KW"/>
</dbReference>
<dbReference type="Gene3D" id="3.30.460.80">
    <property type="entry name" value="NADH:ubiquinone oxidoreductase, 30kDa subunit"/>
    <property type="match status" value="1"/>
</dbReference>
<dbReference type="HAMAP" id="MF_01357">
    <property type="entry name" value="NDH1_NuoC"/>
    <property type="match status" value="1"/>
</dbReference>
<dbReference type="InterPro" id="IPR010218">
    <property type="entry name" value="NADH_DH_suC"/>
</dbReference>
<dbReference type="InterPro" id="IPR037232">
    <property type="entry name" value="NADH_quin_OxRdtase_su_C/D-like"/>
</dbReference>
<dbReference type="InterPro" id="IPR001268">
    <property type="entry name" value="NADH_UbQ_OxRdtase_30kDa_su"/>
</dbReference>
<dbReference type="InterPro" id="IPR020396">
    <property type="entry name" value="NADH_UbQ_OxRdtase_CS"/>
</dbReference>
<dbReference type="NCBIfam" id="TIGR01961">
    <property type="entry name" value="NuoC_fam"/>
    <property type="match status" value="1"/>
</dbReference>
<dbReference type="PANTHER" id="PTHR10884:SF14">
    <property type="entry name" value="NADH DEHYDROGENASE [UBIQUINONE] IRON-SULFUR PROTEIN 3, MITOCHONDRIAL"/>
    <property type="match status" value="1"/>
</dbReference>
<dbReference type="PANTHER" id="PTHR10884">
    <property type="entry name" value="NADH DEHYDROGENASE UBIQUINONE IRON-SULFUR PROTEIN 3"/>
    <property type="match status" value="1"/>
</dbReference>
<dbReference type="Pfam" id="PF00329">
    <property type="entry name" value="Complex1_30kDa"/>
    <property type="match status" value="1"/>
</dbReference>
<dbReference type="SUPFAM" id="SSF143243">
    <property type="entry name" value="Nqo5-like"/>
    <property type="match status" value="1"/>
</dbReference>
<dbReference type="PROSITE" id="PS00542">
    <property type="entry name" value="COMPLEX1_30K"/>
    <property type="match status" value="1"/>
</dbReference>
<evidence type="ECO:0000255" key="1">
    <source>
        <dbReference type="HAMAP-Rule" id="MF_01357"/>
    </source>
</evidence>
<sequence>MAENNRAVIKLKEKFAASILDVREFRGEVTVTVAREKVVDICRFLKESLQYNLCTDVTAVDYLGKQEPRFMVVYNLYSIPNKDRLRLKAGVPDADCSIDTVSCVWNSANWLEREVYDLMGVQFNNHPDLRRILMTDDWVGHPLRKDYPLQGPDREPYKGRLS</sequence>
<reference key="1">
    <citation type="journal article" date="2003" name="Science">
        <title>Genome of Geobacter sulfurreducens: metal reduction in subsurface environments.</title>
        <authorList>
            <person name="Methe B.A."/>
            <person name="Nelson K.E."/>
            <person name="Eisen J.A."/>
            <person name="Paulsen I.T."/>
            <person name="Nelson W.C."/>
            <person name="Heidelberg J.F."/>
            <person name="Wu D."/>
            <person name="Wu M."/>
            <person name="Ward N.L."/>
            <person name="Beanan M.J."/>
            <person name="Dodson R.J."/>
            <person name="Madupu R."/>
            <person name="Brinkac L.M."/>
            <person name="Daugherty S.C."/>
            <person name="DeBoy R.T."/>
            <person name="Durkin A.S."/>
            <person name="Gwinn M.L."/>
            <person name="Kolonay J.F."/>
            <person name="Sullivan S.A."/>
            <person name="Haft D.H."/>
            <person name="Selengut J."/>
            <person name="Davidsen T.M."/>
            <person name="Zafar N."/>
            <person name="White O."/>
            <person name="Tran B."/>
            <person name="Romero C."/>
            <person name="Forberger H.A."/>
            <person name="Weidman J.F."/>
            <person name="Khouri H.M."/>
            <person name="Feldblyum T.V."/>
            <person name="Utterback T.R."/>
            <person name="Van Aken S.E."/>
            <person name="Lovley D.R."/>
            <person name="Fraser C.M."/>
        </authorList>
    </citation>
    <scope>NUCLEOTIDE SEQUENCE [LARGE SCALE GENOMIC DNA]</scope>
    <source>
        <strain>ATCC 51573 / DSM 12127 / PCA</strain>
    </source>
</reference>
<organism>
    <name type="scientific">Geobacter sulfurreducens (strain ATCC 51573 / DSM 12127 / PCA)</name>
    <dbReference type="NCBI Taxonomy" id="243231"/>
    <lineage>
        <taxon>Bacteria</taxon>
        <taxon>Pseudomonadati</taxon>
        <taxon>Thermodesulfobacteriota</taxon>
        <taxon>Desulfuromonadia</taxon>
        <taxon>Geobacterales</taxon>
        <taxon>Geobacteraceae</taxon>
        <taxon>Geobacter</taxon>
    </lineage>
</organism>
<protein>
    <recommendedName>
        <fullName evidence="1">NADH-quinone oxidoreductase subunit C</fullName>
        <ecNumber evidence="1">7.1.1.-</ecNumber>
    </recommendedName>
    <alternativeName>
        <fullName evidence="1">NADH dehydrogenase I subunit C</fullName>
    </alternativeName>
    <alternativeName>
        <fullName evidence="1">NDH-1 subunit C</fullName>
    </alternativeName>
</protein>
<gene>
    <name evidence="1" type="primary">nuoC</name>
    <name type="ordered locus">GSU0340</name>
</gene>
<keyword id="KW-0997">Cell inner membrane</keyword>
<keyword id="KW-1003">Cell membrane</keyword>
<keyword id="KW-0472">Membrane</keyword>
<keyword id="KW-0520">NAD</keyword>
<keyword id="KW-0874">Quinone</keyword>
<keyword id="KW-1185">Reference proteome</keyword>
<keyword id="KW-1278">Translocase</keyword>
<keyword id="KW-0813">Transport</keyword>
<keyword id="KW-0830">Ubiquinone</keyword>
<accession>Q74GA6</accession>